<dbReference type="EMBL" id="AH001900">
    <property type="protein sequence ID" value="AAA37652.1"/>
    <property type="molecule type" value="Genomic_DNA"/>
</dbReference>
<dbReference type="EMBL" id="S42882">
    <property type="protein sequence ID" value="AAB22967.1"/>
    <property type="molecule type" value="mRNA"/>
</dbReference>
<dbReference type="CCDS" id="CCDS19028.1"/>
<dbReference type="PIR" id="A36303">
    <property type="entry name" value="A36303"/>
</dbReference>
<dbReference type="PIR" id="I52630">
    <property type="entry name" value="I52630"/>
</dbReference>
<dbReference type="RefSeq" id="NP_032098.2">
    <property type="nucleotide sequence ID" value="NM_008072.3"/>
</dbReference>
<dbReference type="SMR" id="P22933"/>
<dbReference type="ComplexPortal" id="CPX-2986">
    <property type="entry name" value="GABA-A receptor, alpha6-beta3-delta"/>
</dbReference>
<dbReference type="ComplexPortal" id="CPX-2987">
    <property type="entry name" value="GABA-A receptor, alpha6-beta2-delta"/>
</dbReference>
<dbReference type="ComplexPortal" id="CPX-2988">
    <property type="entry name" value="GABA-A receptor, alpha4-beta2-delta"/>
</dbReference>
<dbReference type="ComplexPortal" id="CPX-2989">
    <property type="entry name" value="GABA-A receptor, alpha4-beta3-delta"/>
</dbReference>
<dbReference type="FunCoup" id="P22933">
    <property type="interactions" value="405"/>
</dbReference>
<dbReference type="STRING" id="10090.ENSMUSP00000030925"/>
<dbReference type="ChEMBL" id="CHEMBL2094133"/>
<dbReference type="DrugCentral" id="P22933"/>
<dbReference type="GlyCosmos" id="P22933">
    <property type="glycosylation" value="2 sites, No reported glycans"/>
</dbReference>
<dbReference type="GlyGen" id="P22933">
    <property type="glycosylation" value="3 sites, 2 N-linked glycans (2 sites), 1 O-linked glycan (1 site)"/>
</dbReference>
<dbReference type="iPTMnet" id="P22933"/>
<dbReference type="PhosphoSitePlus" id="P22933"/>
<dbReference type="PaxDb" id="10090-ENSMUSP00000030925"/>
<dbReference type="PeptideAtlas" id="P22933"/>
<dbReference type="ProteomicsDB" id="266781"/>
<dbReference type="ABCD" id="P22933">
    <property type="antibodies" value="1 sequenced antibody"/>
</dbReference>
<dbReference type="Antibodypedia" id="12525">
    <property type="antibodies" value="251 antibodies from 32 providers"/>
</dbReference>
<dbReference type="DNASU" id="14403"/>
<dbReference type="Ensembl" id="ENSMUST00000030925.3">
    <property type="protein sequence ID" value="ENSMUSP00000030925.3"/>
    <property type="gene ID" value="ENSMUSG00000029054.9"/>
</dbReference>
<dbReference type="GeneID" id="14403"/>
<dbReference type="KEGG" id="mmu:14403"/>
<dbReference type="UCSC" id="uc008wdf.2">
    <property type="organism name" value="mouse"/>
</dbReference>
<dbReference type="AGR" id="MGI:95622"/>
<dbReference type="CTD" id="2563"/>
<dbReference type="MGI" id="MGI:95622">
    <property type="gene designation" value="Gabrd"/>
</dbReference>
<dbReference type="VEuPathDB" id="HostDB:ENSMUSG00000029054"/>
<dbReference type="eggNOG" id="KOG3643">
    <property type="taxonomic scope" value="Eukaryota"/>
</dbReference>
<dbReference type="GeneTree" id="ENSGT00940000160122"/>
<dbReference type="HOGENOM" id="CLU_010920_0_1_1"/>
<dbReference type="InParanoid" id="P22933"/>
<dbReference type="OMA" id="RCIRAMS"/>
<dbReference type="PhylomeDB" id="P22933"/>
<dbReference type="TreeFam" id="TF315453"/>
<dbReference type="BioGRID-ORCS" id="14403">
    <property type="hits" value="1 hit in 79 CRISPR screens"/>
</dbReference>
<dbReference type="ChiTaRS" id="Gabrd">
    <property type="organism name" value="mouse"/>
</dbReference>
<dbReference type="PRO" id="PR:P22933"/>
<dbReference type="Proteomes" id="UP000000589">
    <property type="component" value="Chromosome 4"/>
</dbReference>
<dbReference type="RNAct" id="P22933">
    <property type="molecule type" value="protein"/>
</dbReference>
<dbReference type="Bgee" id="ENSMUSG00000029054">
    <property type="expression patterns" value="Expressed in cerebellar cortex and 76 other cell types or tissues"/>
</dbReference>
<dbReference type="ExpressionAtlas" id="P22933">
    <property type="expression patterns" value="baseline and differential"/>
</dbReference>
<dbReference type="GO" id="GO:0030424">
    <property type="term" value="C:axon"/>
    <property type="evidence" value="ECO:0000314"/>
    <property type="project" value="CACAO"/>
</dbReference>
<dbReference type="GO" id="GO:0034707">
    <property type="term" value="C:chloride channel complex"/>
    <property type="evidence" value="ECO:0007669"/>
    <property type="project" value="UniProtKB-KW"/>
</dbReference>
<dbReference type="GO" id="GO:0030425">
    <property type="term" value="C:dendrite"/>
    <property type="evidence" value="ECO:0000314"/>
    <property type="project" value="CACAO"/>
</dbReference>
<dbReference type="GO" id="GO:1902711">
    <property type="term" value="C:GABA-A receptor complex"/>
    <property type="evidence" value="ECO:0000266"/>
    <property type="project" value="ComplexPortal"/>
</dbReference>
<dbReference type="GO" id="GO:0098982">
    <property type="term" value="C:GABA-ergic synapse"/>
    <property type="evidence" value="ECO:0000314"/>
    <property type="project" value="SynGO"/>
</dbReference>
<dbReference type="GO" id="GO:0098978">
    <property type="term" value="C:glutamatergic synapse"/>
    <property type="evidence" value="ECO:0007669"/>
    <property type="project" value="Ensembl"/>
</dbReference>
<dbReference type="GO" id="GO:0043025">
    <property type="term" value="C:neuronal cell body"/>
    <property type="evidence" value="ECO:0000314"/>
    <property type="project" value="CACAO"/>
</dbReference>
<dbReference type="GO" id="GO:0005886">
    <property type="term" value="C:plasma membrane"/>
    <property type="evidence" value="ECO:0000250"/>
    <property type="project" value="UniProtKB"/>
</dbReference>
<dbReference type="GO" id="GO:0045211">
    <property type="term" value="C:postsynaptic membrane"/>
    <property type="evidence" value="ECO:0000314"/>
    <property type="project" value="SynGO"/>
</dbReference>
<dbReference type="GO" id="GO:0005254">
    <property type="term" value="F:chloride channel activity"/>
    <property type="evidence" value="ECO:0007669"/>
    <property type="project" value="UniProtKB-KW"/>
</dbReference>
<dbReference type="GO" id="GO:0004890">
    <property type="term" value="F:GABA-A receptor activity"/>
    <property type="evidence" value="ECO:0007669"/>
    <property type="project" value="Ensembl"/>
</dbReference>
<dbReference type="GO" id="GO:1904315">
    <property type="term" value="F:transmitter-gated monoatomic ion channel activity involved in regulation of postsynaptic membrane potential"/>
    <property type="evidence" value="ECO:0000314"/>
    <property type="project" value="SynGO"/>
</dbReference>
<dbReference type="GO" id="GO:0007214">
    <property type="term" value="P:gamma-aminobutyric acid signaling pathway"/>
    <property type="evidence" value="ECO:0000266"/>
    <property type="project" value="ComplexPortal"/>
</dbReference>
<dbReference type="GO" id="GO:0051932">
    <property type="term" value="P:synaptic transmission, GABAergic"/>
    <property type="evidence" value="ECO:0000303"/>
    <property type="project" value="ComplexPortal"/>
</dbReference>
<dbReference type="FunFam" id="1.20.58.390:FF:000015">
    <property type="entry name" value="Gamma-aminobutyric acid (GABA-A) receptor, subunit delta"/>
    <property type="match status" value="1"/>
</dbReference>
<dbReference type="FunFam" id="2.70.170.10:FF:000018">
    <property type="entry name" value="Gamma-aminobutyric acid (GABA-A) receptor, subunit delta"/>
    <property type="match status" value="1"/>
</dbReference>
<dbReference type="Gene3D" id="2.70.170.10">
    <property type="entry name" value="Neurotransmitter-gated ion-channel ligand-binding domain"/>
    <property type="match status" value="1"/>
</dbReference>
<dbReference type="Gene3D" id="1.20.58.390">
    <property type="entry name" value="Neurotransmitter-gated ion-channel transmembrane domain"/>
    <property type="match status" value="1"/>
</dbReference>
<dbReference type="InterPro" id="IPR006028">
    <property type="entry name" value="GABAA/Glycine_rcpt"/>
</dbReference>
<dbReference type="InterPro" id="IPR008098">
    <property type="entry name" value="GABAAd_rcpt"/>
</dbReference>
<dbReference type="InterPro" id="IPR006202">
    <property type="entry name" value="Neur_chan_lig-bd"/>
</dbReference>
<dbReference type="InterPro" id="IPR036734">
    <property type="entry name" value="Neur_chan_lig-bd_sf"/>
</dbReference>
<dbReference type="InterPro" id="IPR006201">
    <property type="entry name" value="Neur_channel"/>
</dbReference>
<dbReference type="InterPro" id="IPR036719">
    <property type="entry name" value="Neuro-gated_channel_TM_sf"/>
</dbReference>
<dbReference type="InterPro" id="IPR038050">
    <property type="entry name" value="Neuro_actylchol_rec"/>
</dbReference>
<dbReference type="InterPro" id="IPR006029">
    <property type="entry name" value="Neurotrans-gated_channel_TM"/>
</dbReference>
<dbReference type="InterPro" id="IPR018000">
    <property type="entry name" value="Neurotransmitter_ion_chnl_CS"/>
</dbReference>
<dbReference type="NCBIfam" id="TIGR00860">
    <property type="entry name" value="LIC"/>
    <property type="match status" value="1"/>
</dbReference>
<dbReference type="PANTHER" id="PTHR18945">
    <property type="entry name" value="NEUROTRANSMITTER GATED ION CHANNEL"/>
    <property type="match status" value="1"/>
</dbReference>
<dbReference type="Pfam" id="PF02931">
    <property type="entry name" value="Neur_chan_LBD"/>
    <property type="match status" value="1"/>
</dbReference>
<dbReference type="Pfam" id="PF02932">
    <property type="entry name" value="Neur_chan_memb"/>
    <property type="match status" value="1"/>
</dbReference>
<dbReference type="PRINTS" id="PR01722">
    <property type="entry name" value="GABAARDELTA"/>
</dbReference>
<dbReference type="PRINTS" id="PR00253">
    <property type="entry name" value="GABAARECEPTR"/>
</dbReference>
<dbReference type="PRINTS" id="PR00252">
    <property type="entry name" value="NRIONCHANNEL"/>
</dbReference>
<dbReference type="SUPFAM" id="SSF90112">
    <property type="entry name" value="Neurotransmitter-gated ion-channel transmembrane pore"/>
    <property type="match status" value="1"/>
</dbReference>
<dbReference type="SUPFAM" id="SSF63712">
    <property type="entry name" value="Nicotinic receptor ligand binding domain-like"/>
    <property type="match status" value="1"/>
</dbReference>
<dbReference type="PROSITE" id="PS00236">
    <property type="entry name" value="NEUROTR_ION_CHANNEL"/>
    <property type="match status" value="1"/>
</dbReference>
<proteinExistence type="evidence at transcript level"/>
<feature type="signal peptide" evidence="3">
    <location>
        <begin position="1"/>
        <end position="24"/>
    </location>
</feature>
<feature type="chain" id="PRO_0000000469" description="Gamma-aminobutyric acid receptor subunit delta">
    <location>
        <begin position="25"/>
        <end position="449"/>
    </location>
</feature>
<feature type="topological domain" description="Extracellular" evidence="5">
    <location>
        <begin position="25"/>
        <end position="251"/>
    </location>
</feature>
<feature type="transmembrane region" description="Helical" evidence="1">
    <location>
        <begin position="252"/>
        <end position="271"/>
    </location>
</feature>
<feature type="topological domain" description="Cytoplasmic" evidence="5">
    <location>
        <begin position="272"/>
        <end position="275"/>
    </location>
</feature>
<feature type="transmembrane region" description="Helical" evidence="1">
    <location>
        <begin position="276"/>
        <end position="298"/>
    </location>
</feature>
<feature type="topological domain" description="Extracellular" evidence="5">
    <location>
        <begin position="299"/>
        <end position="308"/>
    </location>
</feature>
<feature type="transmembrane region" description="Helical" evidence="1">
    <location>
        <begin position="309"/>
        <end position="331"/>
    </location>
</feature>
<feature type="topological domain" description="Cytoplasmic" evidence="5">
    <location>
        <begin position="332"/>
        <end position="423"/>
    </location>
</feature>
<feature type="transmembrane region" description="Helical" evidence="1">
    <location>
        <begin position="424"/>
        <end position="446"/>
    </location>
</feature>
<feature type="topological domain" description="Extracellular" evidence="5">
    <location>
        <begin position="447"/>
        <end position="449"/>
    </location>
</feature>
<feature type="modified residue" description="Phosphoserine" evidence="2">
    <location>
        <position position="390"/>
    </location>
</feature>
<feature type="glycosylation site" description="N-linked (GlcNAc...) asparagine" evidence="3">
    <location>
        <position position="103"/>
    </location>
</feature>
<feature type="glycosylation site" description="N-linked (GlcNAc...) asparagine" evidence="3">
    <location>
        <position position="106"/>
    </location>
</feature>
<feature type="disulfide bond" evidence="1">
    <location>
        <begin position="164"/>
        <end position="178"/>
    </location>
</feature>
<feature type="sequence conflict" description="In Ref. 2; AAB22967." evidence="5" ref="2">
    <original>Y</original>
    <variation>H</variation>
    <location>
        <position position="255"/>
    </location>
</feature>
<protein>
    <recommendedName>
        <fullName evidence="4">Gamma-aminobutyric acid receptor subunit delta</fullName>
    </recommendedName>
    <alternativeName>
        <fullName>GABA(A) receptor subunit delta</fullName>
        <shortName evidence="1">GABAAR subunit delta</shortName>
    </alternativeName>
</protein>
<evidence type="ECO:0000250" key="1">
    <source>
        <dbReference type="UniProtKB" id="O14764"/>
    </source>
</evidence>
<evidence type="ECO:0000250" key="2">
    <source>
        <dbReference type="UniProtKB" id="P18506"/>
    </source>
</evidence>
<evidence type="ECO:0000255" key="3"/>
<evidence type="ECO:0000303" key="4">
    <source>
    </source>
</evidence>
<evidence type="ECO:0000305" key="5"/>
<evidence type="ECO:0000312" key="6">
    <source>
        <dbReference type="MGI" id="MGI:95622"/>
    </source>
</evidence>
<comment type="function">
    <text evidence="1 2">Delta subunit of the heteropentameric ligand-gated chloride channel gated by gamma-aminobutyric acid (GABA), a major inhibitory neurotransmitter in the brain (By similarity). GABA-gated chloride channels, also named GABA(A) receptors (GABAAR), consist of five subunits arranged around a central pore and contain GABA active binding site(s) located at the alpha and beta subunit interface(s) (By similarity). When activated by GABA, GABAARs selectively allow the flow of chloride anions across the cell membrane down their electrochemical gradient (By similarity). GABAARs containing delta/GABRD subunits are predominantly expressed and located in extrasynaptic or perisynaptic positions on hippocampus and cerebellar granule cells, and contribute to the tonic GABAergic inhibition (By similarity). GABAAR containing alpha-4-beta-3-delta subunits can simultaneously bind GABA and histamine where histamine binds at the interface of two neighboring beta subunits, which may be involved in the regulation of sleep and wakefulness (By similarity).</text>
</comment>
<comment type="catalytic activity">
    <reaction evidence="1">
        <text>chloride(in) = chloride(out)</text>
        <dbReference type="Rhea" id="RHEA:29823"/>
        <dbReference type="ChEBI" id="CHEBI:17996"/>
    </reaction>
</comment>
<comment type="subunit">
    <text evidence="1">Heteropentamer, formed by a combination of alpha (GABRA1-6), beta (GABRB1-3), gamma (GABRG1-3), delta (GABRD), epsilon (GABRE), rho (GABRR1-3), pi (GABRP) and theta (GABRQ) chains, each subunit exhibiting distinct physiological and pharmacological properties.</text>
</comment>
<comment type="subcellular location">
    <subcellularLocation>
        <location evidence="2">Cell membrane</location>
        <topology evidence="1">Multi-pass membrane protein</topology>
    </subcellularLocation>
</comment>
<comment type="domain">
    <text evidence="1">GABAARs subunits share a common topological structure: a peptide sequence made up of a long extracellular N-terminal, four transmembrane domains, intracellular or cytoplasmic domain located between the third and the fourth transmembrane domains.</text>
</comment>
<comment type="similarity">
    <text evidence="5">Belongs to the ligand-gated ion channel (TC 1.A.9) family. Gamma-aminobutyric acid receptor (TC 1.A.9.5) subfamily. GABRD sub-subfamily.</text>
</comment>
<reference key="1">
    <citation type="journal article" date="1990" name="DNA Cell Biol.">
        <title>The murine GABAA receptor delta-subunit gene: structure and assignment to human chromosome 1.</title>
        <authorList>
            <person name="Sommer B."/>
            <person name="Poustka A."/>
            <person name="Spurr N.K."/>
            <person name="Seeburg P.H."/>
        </authorList>
    </citation>
    <scope>NUCLEOTIDE SEQUENCE [GENOMIC DNA]</scope>
</reference>
<reference key="2">
    <citation type="journal article" date="1992" name="Brain Res. Bull.">
        <title>Strain comparisons and developmental profile of the delta subunit of the murine GABAA receptor.</title>
        <authorList>
            <person name="Wang J.B."/>
            <person name="Kofuji P."/>
            <person name="Burt D.R."/>
        </authorList>
    </citation>
    <scope>NUCLEOTIDE SEQUENCE [MRNA]</scope>
    <source>
        <strain>DBA/2J</strain>
        <tissue>Brain</tissue>
    </source>
</reference>
<keyword id="KW-1003">Cell membrane</keyword>
<keyword id="KW-0868">Chloride</keyword>
<keyword id="KW-0869">Chloride channel</keyword>
<keyword id="KW-1015">Disulfide bond</keyword>
<keyword id="KW-0325">Glycoprotein</keyword>
<keyword id="KW-0407">Ion channel</keyword>
<keyword id="KW-0406">Ion transport</keyword>
<keyword id="KW-0472">Membrane</keyword>
<keyword id="KW-0597">Phosphoprotein</keyword>
<keyword id="KW-1185">Reference proteome</keyword>
<keyword id="KW-0732">Signal</keyword>
<keyword id="KW-0812">Transmembrane</keyword>
<keyword id="KW-1133">Transmembrane helix</keyword>
<keyword id="KW-0813">Transport</keyword>
<name>GBRD_MOUSE</name>
<organism>
    <name type="scientific">Mus musculus</name>
    <name type="common">Mouse</name>
    <dbReference type="NCBI Taxonomy" id="10090"/>
    <lineage>
        <taxon>Eukaryota</taxon>
        <taxon>Metazoa</taxon>
        <taxon>Chordata</taxon>
        <taxon>Craniata</taxon>
        <taxon>Vertebrata</taxon>
        <taxon>Euteleostomi</taxon>
        <taxon>Mammalia</taxon>
        <taxon>Eutheria</taxon>
        <taxon>Euarchontoglires</taxon>
        <taxon>Glires</taxon>
        <taxon>Rodentia</taxon>
        <taxon>Myomorpha</taxon>
        <taxon>Muroidea</taxon>
        <taxon>Muridae</taxon>
        <taxon>Murinae</taxon>
        <taxon>Mus</taxon>
        <taxon>Mus</taxon>
    </lineage>
</organism>
<gene>
    <name evidence="6" type="primary">Gabrd</name>
</gene>
<accession>P22933</accession>
<sequence length="449" mass="50522">MDVLGWLLLPLLLLCTQPHHGARAMNDIGDYVGSNLEISWLPNLDGLMEGYARNFRPGIGGAPVNVALALEVASIDHISEANMEYTMTVFLHQSWRDSRLSYNHTNETLGLDSRFVDKLWLPDTFIVNAKSAWFHDVTVENKLIRLQPDGVILYSIRITSTVACDMDLAKYPLDEQECMLDLESYGYSSEDIVYYWSENQEQIHGLDRLQLAQFTITSYRFTTELMNFKSAGQFPRLSLHFQLRRNRGVYIIQSYMPSVLLVAMSWVSFWISQAAVPARVSLGITTVLTMTTLMVSARSSLPRASAIKALDVYFWICYVFVFAALVEYAFAHFNADYRKKRKAKVKVTKPRAEMDVRNAIVLFSLSAAGVSQELAISRRQGRVPGNLMGSYRSVEVEAKKEGGSRPGGPGGIRSRLKPIDADTIDIYARAVFPAAFAAVNIIYWAAYTM</sequence>